<protein>
    <recommendedName>
        <fullName evidence="2">DnaA regulatory inactivator Hda</fullName>
    </recommendedName>
</protein>
<gene>
    <name evidence="2" type="primary">hda</name>
    <name type="ordered locus">EcSMS35_2643</name>
</gene>
<dbReference type="EMBL" id="CP000970">
    <property type="protein sequence ID" value="ACB19989.1"/>
    <property type="status" value="ALT_INIT"/>
    <property type="molecule type" value="Genomic_DNA"/>
</dbReference>
<dbReference type="RefSeq" id="WP_001307333.1">
    <property type="nucleotide sequence ID" value="NC_010498.1"/>
</dbReference>
<dbReference type="SMR" id="B1LNE6"/>
<dbReference type="KEGG" id="ecm:EcSMS35_2643"/>
<dbReference type="HOGENOM" id="CLU_072265_1_1_6"/>
<dbReference type="Proteomes" id="UP000007011">
    <property type="component" value="Chromosome"/>
</dbReference>
<dbReference type="GO" id="GO:0006270">
    <property type="term" value="P:DNA replication initiation"/>
    <property type="evidence" value="ECO:0007669"/>
    <property type="project" value="TreeGrafter"/>
</dbReference>
<dbReference type="GO" id="GO:0032297">
    <property type="term" value="P:negative regulation of DNA-templated DNA replication initiation"/>
    <property type="evidence" value="ECO:0007669"/>
    <property type="project" value="InterPro"/>
</dbReference>
<dbReference type="FunFam" id="1.10.8.60:FF:000024">
    <property type="entry name" value="DnaA regulatory inactivator Hda"/>
    <property type="match status" value="1"/>
</dbReference>
<dbReference type="FunFam" id="3.40.50.300:FF:000452">
    <property type="entry name" value="DnaA regulatory inactivator Hda"/>
    <property type="match status" value="1"/>
</dbReference>
<dbReference type="Gene3D" id="1.10.8.60">
    <property type="match status" value="1"/>
</dbReference>
<dbReference type="Gene3D" id="3.40.50.300">
    <property type="entry name" value="P-loop containing nucleotide triphosphate hydrolases"/>
    <property type="match status" value="1"/>
</dbReference>
<dbReference type="HAMAP" id="MF_01158">
    <property type="entry name" value="Hda"/>
    <property type="match status" value="1"/>
</dbReference>
<dbReference type="InterPro" id="IPR020591">
    <property type="entry name" value="Chromosome_initiator_DnaA-like"/>
</dbReference>
<dbReference type="InterPro" id="IPR013317">
    <property type="entry name" value="DnaA_dom"/>
</dbReference>
<dbReference type="InterPro" id="IPR017788">
    <property type="entry name" value="Hda"/>
</dbReference>
<dbReference type="InterPro" id="IPR022864">
    <property type="entry name" value="Hda_Enterobact"/>
</dbReference>
<dbReference type="InterPro" id="IPR055199">
    <property type="entry name" value="Hda_lid"/>
</dbReference>
<dbReference type="InterPro" id="IPR027417">
    <property type="entry name" value="P-loop_NTPase"/>
</dbReference>
<dbReference type="NCBIfam" id="TIGR03420">
    <property type="entry name" value="DnaA_homol_Hda"/>
    <property type="match status" value="1"/>
</dbReference>
<dbReference type="NCBIfam" id="NF005982">
    <property type="entry name" value="PRK08084.1"/>
    <property type="match status" value="1"/>
</dbReference>
<dbReference type="PANTHER" id="PTHR30050">
    <property type="entry name" value="CHROMOSOMAL REPLICATION INITIATOR PROTEIN DNAA"/>
    <property type="match status" value="1"/>
</dbReference>
<dbReference type="PANTHER" id="PTHR30050:SF5">
    <property type="entry name" value="DNAA REGULATORY INACTIVATOR HDA"/>
    <property type="match status" value="1"/>
</dbReference>
<dbReference type="Pfam" id="PF00308">
    <property type="entry name" value="Bac_DnaA"/>
    <property type="match status" value="1"/>
</dbReference>
<dbReference type="Pfam" id="PF22688">
    <property type="entry name" value="Hda_lid"/>
    <property type="match status" value="1"/>
</dbReference>
<dbReference type="PRINTS" id="PR00051">
    <property type="entry name" value="DNAA"/>
</dbReference>
<dbReference type="SUPFAM" id="SSF52540">
    <property type="entry name" value="P-loop containing nucleoside triphosphate hydrolases"/>
    <property type="match status" value="1"/>
</dbReference>
<reference key="1">
    <citation type="journal article" date="2008" name="J. Bacteriol.">
        <title>Insights into the environmental resistance gene pool from the genome sequence of the multidrug-resistant environmental isolate Escherichia coli SMS-3-5.</title>
        <authorList>
            <person name="Fricke W.F."/>
            <person name="Wright M.S."/>
            <person name="Lindell A.H."/>
            <person name="Harkins D.M."/>
            <person name="Baker-Austin C."/>
            <person name="Ravel J."/>
            <person name="Stepanauskas R."/>
        </authorList>
    </citation>
    <scope>NUCLEOTIDE SEQUENCE [LARGE SCALE GENOMIC DNA]</scope>
    <source>
        <strain>SMS-3-5 / SECEC</strain>
    </source>
</reference>
<comment type="function">
    <text evidence="1">Mediates the interaction of DNA replication initiator protein DnaA with DNA polymerase subunit beta sliding clamp (dnaN). Stimulates hydrolysis of ATP-DnaA to ADP-DnaA, rendering DnaA inactive for reinitiation, a process called regulatory inhibition of DnaA or RIDA (By similarity).</text>
</comment>
<comment type="subunit">
    <text evidence="2">The active form seems to be an ADP-bound monomer. Forms the RIDA complex (regulatory inactivation of DnaA) of ATP-DnaA, ADP-Hda and the DNA-loaded beta sliding clamp (dnaN).</text>
</comment>
<comment type="similarity">
    <text evidence="2">Belongs to the DnaA family. HdA subfamily.</text>
</comment>
<comment type="sequence caution" evidence="3">
    <conflict type="erroneous initiation">
        <sequence resource="EMBL-CDS" id="ACB19989"/>
    </conflict>
</comment>
<organism>
    <name type="scientific">Escherichia coli (strain SMS-3-5 / SECEC)</name>
    <dbReference type="NCBI Taxonomy" id="439855"/>
    <lineage>
        <taxon>Bacteria</taxon>
        <taxon>Pseudomonadati</taxon>
        <taxon>Pseudomonadota</taxon>
        <taxon>Gammaproteobacteria</taxon>
        <taxon>Enterobacterales</taxon>
        <taxon>Enterobacteriaceae</taxon>
        <taxon>Escherichia</taxon>
    </lineage>
</organism>
<feature type="chain" id="PRO_1000137814" description="DnaA regulatory inactivator Hda">
    <location>
        <begin position="1"/>
        <end position="233"/>
    </location>
</feature>
<evidence type="ECO:0000250" key="1"/>
<evidence type="ECO:0000255" key="2">
    <source>
        <dbReference type="HAMAP-Rule" id="MF_01158"/>
    </source>
</evidence>
<evidence type="ECO:0000305" key="3"/>
<keyword id="KW-0235">DNA replication</keyword>
<keyword id="KW-0236">DNA replication inhibitor</keyword>
<proteinExistence type="inferred from homology"/>
<sequence length="233" mass="26633">MNTPAQLSLPLYLPDDETFASFWPGDNSSLLAALQNVLRQEHSGYIYLWAREGAGRSHLLHAACAELSQRGDAVGYVPLDKRTWFVPEVLDGMEHLSLVCIDNIECIAGDELWEMAIFDLYNRILESGKTRLLITGDRPPRQLNLGLPDLASRLDWGQIYKLQPLSDEDKLQALQLRARLRGFELPEDVGRFLLKRLDREMRTLFMTLDQLDRASITAQRKLTIPFVKEILKL</sequence>
<name>HDA_ECOSM</name>
<accession>B1LNE6</accession>